<dbReference type="EC" id="3.1.27.-"/>
<dbReference type="PIR" id="JX0295">
    <property type="entry name" value="JX0295"/>
</dbReference>
<dbReference type="SMR" id="Q7M456"/>
<dbReference type="FunCoup" id="Q7M456">
    <property type="interactions" value="74"/>
</dbReference>
<dbReference type="InParanoid" id="Q7M456"/>
<dbReference type="OrthoDB" id="435754at2759"/>
<dbReference type="Proteomes" id="UP000005408">
    <property type="component" value="Unplaced"/>
</dbReference>
<dbReference type="GO" id="GO:0005576">
    <property type="term" value="C:extracellular region"/>
    <property type="evidence" value="ECO:0007669"/>
    <property type="project" value="UniProtKB-SubCell"/>
</dbReference>
<dbReference type="GO" id="GO:0033897">
    <property type="term" value="F:ribonuclease T2 activity"/>
    <property type="evidence" value="ECO:0007669"/>
    <property type="project" value="InterPro"/>
</dbReference>
<dbReference type="GO" id="GO:0003723">
    <property type="term" value="F:RNA binding"/>
    <property type="evidence" value="ECO:0007669"/>
    <property type="project" value="InterPro"/>
</dbReference>
<dbReference type="GO" id="GO:0006401">
    <property type="term" value="P:RNA catabolic process"/>
    <property type="evidence" value="ECO:0007669"/>
    <property type="project" value="TreeGrafter"/>
</dbReference>
<dbReference type="CDD" id="cd01061">
    <property type="entry name" value="RNase_T2_euk"/>
    <property type="match status" value="1"/>
</dbReference>
<dbReference type="Gene3D" id="3.90.730.10">
    <property type="entry name" value="Ribonuclease T2-like"/>
    <property type="match status" value="1"/>
</dbReference>
<dbReference type="InterPro" id="IPR033697">
    <property type="entry name" value="Ribonuclease_T2_eukaryotic"/>
</dbReference>
<dbReference type="InterPro" id="IPR001568">
    <property type="entry name" value="RNase_T2-like"/>
</dbReference>
<dbReference type="InterPro" id="IPR036430">
    <property type="entry name" value="RNase_T2-like_sf"/>
</dbReference>
<dbReference type="InterPro" id="IPR018188">
    <property type="entry name" value="RNase_T2_His_AS_1"/>
</dbReference>
<dbReference type="InterPro" id="IPR033130">
    <property type="entry name" value="RNase_T2_His_AS_2"/>
</dbReference>
<dbReference type="PANTHER" id="PTHR11240">
    <property type="entry name" value="RIBONUCLEASE T2"/>
    <property type="match status" value="1"/>
</dbReference>
<dbReference type="PANTHER" id="PTHR11240:SF22">
    <property type="entry name" value="RIBONUCLEASE T2"/>
    <property type="match status" value="1"/>
</dbReference>
<dbReference type="Pfam" id="PF00445">
    <property type="entry name" value="Ribonuclease_T2"/>
    <property type="match status" value="1"/>
</dbReference>
<dbReference type="SUPFAM" id="SSF55895">
    <property type="entry name" value="Ribonuclease Rh-like"/>
    <property type="match status" value="1"/>
</dbReference>
<dbReference type="PROSITE" id="PS00530">
    <property type="entry name" value="RNASE_T2_1"/>
    <property type="match status" value="1"/>
</dbReference>
<dbReference type="PROSITE" id="PS00531">
    <property type="entry name" value="RNASE_T2_2"/>
    <property type="match status" value="1"/>
</dbReference>
<reference key="1">
    <citation type="journal article" date="1993" name="J. Biochem.">
        <title>Purification, some properties, and primary structure of a base non-specific ribonuclease from oyster (Crussdstrea grigus).</title>
        <authorList>
            <person name="Watanabe H."/>
            <person name="Narumi H."/>
            <person name="Inaba T."/>
            <person name="Ohgi K."/>
            <person name="Irie M."/>
        </authorList>
    </citation>
    <scope>PROTEIN SEQUENCE</scope>
    <scope>CHARACTERIZATION</scope>
</reference>
<name>RNOY_MAGGI</name>
<accession>Q7M456</accession>
<organism>
    <name type="scientific">Magallana gigas</name>
    <name type="common">Pacific oyster</name>
    <name type="synonym">Crassostrea gigas</name>
    <dbReference type="NCBI Taxonomy" id="29159"/>
    <lineage>
        <taxon>Eukaryota</taxon>
        <taxon>Metazoa</taxon>
        <taxon>Spiralia</taxon>
        <taxon>Lophotrochozoa</taxon>
        <taxon>Mollusca</taxon>
        <taxon>Bivalvia</taxon>
        <taxon>Autobranchia</taxon>
        <taxon>Pteriomorphia</taxon>
        <taxon>Ostreida</taxon>
        <taxon>Ostreoidea</taxon>
        <taxon>Ostreidae</taxon>
        <taxon>Magallana</taxon>
    </lineage>
</organism>
<keyword id="KW-0903">Direct protein sequencing</keyword>
<keyword id="KW-1015">Disulfide bond</keyword>
<keyword id="KW-0255">Endonuclease</keyword>
<keyword id="KW-0325">Glycoprotein</keyword>
<keyword id="KW-0378">Hydrolase</keyword>
<keyword id="KW-0540">Nuclease</keyword>
<keyword id="KW-1185">Reference proteome</keyword>
<keyword id="KW-0964">Secreted</keyword>
<protein>
    <recommendedName>
        <fullName>Ribonuclease Oy</fullName>
        <shortName>RNase Oy</shortName>
        <ecNumber>3.1.27.-</ecNumber>
    </recommendedName>
</protein>
<comment type="function">
    <text>Releases mononucleotides from RNA in the order of 3'-GMP, 3'-AMP and 3'-UMP.</text>
</comment>
<comment type="biophysicochemical properties">
    <phDependence>
        <text>Optimum pH is 5.0.</text>
    </phDependence>
</comment>
<comment type="subcellular location">
    <subcellularLocation>
        <location>Secreted</location>
    </subcellularLocation>
</comment>
<comment type="similarity">
    <text evidence="3">Belongs to the RNase T2 family.</text>
</comment>
<proteinExistence type="evidence at protein level"/>
<feature type="chain" id="PRO_0000206510" description="Ribonuclease Oy">
    <location>
        <begin position="1"/>
        <end position="213"/>
    </location>
</feature>
<feature type="active site" evidence="1">
    <location>
        <position position="35"/>
    </location>
</feature>
<feature type="active site" evidence="1">
    <location>
        <position position="89"/>
    </location>
</feature>
<feature type="active site" evidence="1">
    <location>
        <position position="93"/>
    </location>
</feature>
<feature type="glycosylation site" description="N-linked (GlcNAc...) asparagine" evidence="2">
    <location>
        <position position="52"/>
    </location>
</feature>
<feature type="glycosylation site" description="N-linked (GlcNAc...) asparagine" evidence="2">
    <location>
        <position position="121"/>
    </location>
</feature>
<feature type="glycosylation site" description="N-linked (GlcNAc...) asparagine" evidence="2">
    <location>
        <position position="142"/>
    </location>
</feature>
<feature type="disulfide bond" evidence="1">
    <location>
        <begin position="51"/>
        <end position="96"/>
    </location>
</feature>
<feature type="disulfide bond" evidence="1">
    <location>
        <begin position="160"/>
        <end position="198"/>
    </location>
</feature>
<feature type="disulfide bond" evidence="1">
    <location>
        <begin position="178"/>
        <end position="188"/>
    </location>
</feature>
<sequence>KDWNYFTFAQQWPIAVCAEHKSCFIPDSVVGWGIHGLWPSSDTESKGPENCNGSWPFDINNVMPLVPELKKYWPNLYPDTKANSFWEHEWSKHGTCATSLPATSNELKYFGMGLKLHAKYNISRILVNQGILPSKTAGYMINETEAAVKRELGVDAVIECVYDKEKTKKQLLYEISICLTKEFELISCNKKEVSETTCPRKEPFFYPPVHDNN</sequence>
<evidence type="ECO:0000250" key="1"/>
<evidence type="ECO:0000255" key="2"/>
<evidence type="ECO:0000305" key="3"/>